<dbReference type="EC" id="7.1.1.-" evidence="1"/>
<dbReference type="EMBL" id="CP000825">
    <property type="protein sequence ID" value="ABV49796.1"/>
    <property type="molecule type" value="Genomic_DNA"/>
</dbReference>
<dbReference type="RefSeq" id="WP_002806984.1">
    <property type="nucleotide sequence ID" value="NC_009840.1"/>
</dbReference>
<dbReference type="SMR" id="A8G2G5"/>
<dbReference type="STRING" id="93060.P9215_01771"/>
<dbReference type="KEGG" id="pmh:P9215_01771"/>
<dbReference type="eggNOG" id="COG1143">
    <property type="taxonomic scope" value="Bacteria"/>
</dbReference>
<dbReference type="HOGENOM" id="CLU_122804_0_0_3"/>
<dbReference type="OrthoDB" id="9798098at2"/>
<dbReference type="Proteomes" id="UP000002014">
    <property type="component" value="Chromosome"/>
</dbReference>
<dbReference type="GO" id="GO:0031676">
    <property type="term" value="C:plasma membrane-derived thylakoid membrane"/>
    <property type="evidence" value="ECO:0007669"/>
    <property type="project" value="UniProtKB-SubCell"/>
</dbReference>
<dbReference type="GO" id="GO:0051539">
    <property type="term" value="F:4 iron, 4 sulfur cluster binding"/>
    <property type="evidence" value="ECO:0007669"/>
    <property type="project" value="UniProtKB-KW"/>
</dbReference>
<dbReference type="GO" id="GO:0005506">
    <property type="term" value="F:iron ion binding"/>
    <property type="evidence" value="ECO:0007669"/>
    <property type="project" value="UniProtKB-UniRule"/>
</dbReference>
<dbReference type="GO" id="GO:0008137">
    <property type="term" value="F:NADH dehydrogenase (ubiquinone) activity"/>
    <property type="evidence" value="ECO:0007669"/>
    <property type="project" value="InterPro"/>
</dbReference>
<dbReference type="GO" id="GO:0048038">
    <property type="term" value="F:quinone binding"/>
    <property type="evidence" value="ECO:0007669"/>
    <property type="project" value="UniProtKB-KW"/>
</dbReference>
<dbReference type="GO" id="GO:0019684">
    <property type="term" value="P:photosynthesis, light reaction"/>
    <property type="evidence" value="ECO:0007669"/>
    <property type="project" value="UniProtKB-UniRule"/>
</dbReference>
<dbReference type="Gene3D" id="3.30.70.3270">
    <property type="match status" value="1"/>
</dbReference>
<dbReference type="HAMAP" id="MF_01351">
    <property type="entry name" value="NDH1_NuoI"/>
    <property type="match status" value="1"/>
</dbReference>
<dbReference type="InterPro" id="IPR017896">
    <property type="entry name" value="4Fe4S_Fe-S-bd"/>
</dbReference>
<dbReference type="InterPro" id="IPR017900">
    <property type="entry name" value="4Fe4S_Fe_S_CS"/>
</dbReference>
<dbReference type="InterPro" id="IPR010226">
    <property type="entry name" value="NADH_quinone_OxRdtase_chainI"/>
</dbReference>
<dbReference type="InterPro" id="IPR004497">
    <property type="entry name" value="NDHI"/>
</dbReference>
<dbReference type="NCBIfam" id="TIGR00403">
    <property type="entry name" value="ndhI"/>
    <property type="match status" value="1"/>
</dbReference>
<dbReference type="NCBIfam" id="TIGR01971">
    <property type="entry name" value="NuoI"/>
    <property type="match status" value="1"/>
</dbReference>
<dbReference type="NCBIfam" id="NF004537">
    <property type="entry name" value="PRK05888.1-3"/>
    <property type="match status" value="1"/>
</dbReference>
<dbReference type="PANTHER" id="PTHR47275">
    <property type="entry name" value="NAD(P)H-QUINONE OXIDOREDUCTASE SUBUNIT I, CHLOROPLASTIC"/>
    <property type="match status" value="1"/>
</dbReference>
<dbReference type="PANTHER" id="PTHR47275:SF1">
    <property type="entry name" value="NAD(P)H-QUINONE OXIDOREDUCTASE SUBUNIT I, CHLOROPLASTIC"/>
    <property type="match status" value="1"/>
</dbReference>
<dbReference type="Pfam" id="PF12838">
    <property type="entry name" value="Fer4_7"/>
    <property type="match status" value="1"/>
</dbReference>
<dbReference type="SUPFAM" id="SSF54862">
    <property type="entry name" value="4Fe-4S ferredoxins"/>
    <property type="match status" value="1"/>
</dbReference>
<dbReference type="PROSITE" id="PS00198">
    <property type="entry name" value="4FE4S_FER_1"/>
    <property type="match status" value="2"/>
</dbReference>
<dbReference type="PROSITE" id="PS51379">
    <property type="entry name" value="4FE4S_FER_2"/>
    <property type="match status" value="2"/>
</dbReference>
<comment type="function">
    <text evidence="1">NDH-1 shuttles electrons from an unknown electron donor, via FMN and iron-sulfur (Fe-S) centers, to quinones in the respiratory and/or the photosynthetic chain. The immediate electron acceptor for the enzyme in this species is believed to be plastoquinone. Couples the redox reaction to proton translocation, and thus conserves the redox energy in a proton gradient.</text>
</comment>
<comment type="catalytic activity">
    <reaction evidence="1">
        <text>a plastoquinone + NADH + (n+1) H(+)(in) = a plastoquinol + NAD(+) + n H(+)(out)</text>
        <dbReference type="Rhea" id="RHEA:42608"/>
        <dbReference type="Rhea" id="RHEA-COMP:9561"/>
        <dbReference type="Rhea" id="RHEA-COMP:9562"/>
        <dbReference type="ChEBI" id="CHEBI:15378"/>
        <dbReference type="ChEBI" id="CHEBI:17757"/>
        <dbReference type="ChEBI" id="CHEBI:57540"/>
        <dbReference type="ChEBI" id="CHEBI:57945"/>
        <dbReference type="ChEBI" id="CHEBI:62192"/>
    </reaction>
</comment>
<comment type="catalytic activity">
    <reaction evidence="1">
        <text>a plastoquinone + NADPH + (n+1) H(+)(in) = a plastoquinol + NADP(+) + n H(+)(out)</text>
        <dbReference type="Rhea" id="RHEA:42612"/>
        <dbReference type="Rhea" id="RHEA-COMP:9561"/>
        <dbReference type="Rhea" id="RHEA-COMP:9562"/>
        <dbReference type="ChEBI" id="CHEBI:15378"/>
        <dbReference type="ChEBI" id="CHEBI:17757"/>
        <dbReference type="ChEBI" id="CHEBI:57783"/>
        <dbReference type="ChEBI" id="CHEBI:58349"/>
        <dbReference type="ChEBI" id="CHEBI:62192"/>
    </reaction>
</comment>
<comment type="cofactor">
    <cofactor evidence="1">
        <name>[4Fe-4S] cluster</name>
        <dbReference type="ChEBI" id="CHEBI:49883"/>
    </cofactor>
    <text evidence="1">Binds 2 [4Fe-4S] clusters per subunit.</text>
</comment>
<comment type="subunit">
    <text evidence="1">NDH-1 is composed of at least 11 different subunits.</text>
</comment>
<comment type="subcellular location">
    <subcellularLocation>
        <location evidence="1">Cellular thylakoid membrane</location>
        <topology evidence="1">Peripheral membrane protein</topology>
    </subcellularLocation>
</comment>
<comment type="similarity">
    <text evidence="1">Belongs to the complex I 23 kDa subunit family.</text>
</comment>
<accession>A8G2G5</accession>
<evidence type="ECO:0000255" key="1">
    <source>
        <dbReference type="HAMAP-Rule" id="MF_01351"/>
    </source>
</evidence>
<reference key="1">
    <citation type="journal article" date="2007" name="PLoS Genet.">
        <title>Patterns and implications of gene gain and loss in the evolution of Prochlorococcus.</title>
        <authorList>
            <person name="Kettler G.C."/>
            <person name="Martiny A.C."/>
            <person name="Huang K."/>
            <person name="Zucker J."/>
            <person name="Coleman M.L."/>
            <person name="Rodrigue S."/>
            <person name="Chen F."/>
            <person name="Lapidus A."/>
            <person name="Ferriera S."/>
            <person name="Johnson J."/>
            <person name="Steglich C."/>
            <person name="Church G.M."/>
            <person name="Richardson P."/>
            <person name="Chisholm S.W."/>
        </authorList>
    </citation>
    <scope>NUCLEOTIDE SEQUENCE [LARGE SCALE GENOMIC DNA]</scope>
    <source>
        <strain>MIT 9215</strain>
    </source>
</reference>
<feature type="chain" id="PRO_1000067771" description="NAD(P)H-quinone oxidoreductase subunit I">
    <location>
        <begin position="1"/>
        <end position="208"/>
    </location>
</feature>
<feature type="domain" description="4Fe-4S ferredoxin-type 1" evidence="1">
    <location>
        <begin position="55"/>
        <end position="84"/>
    </location>
</feature>
<feature type="domain" description="4Fe-4S ferredoxin-type 2" evidence="1">
    <location>
        <begin position="95"/>
        <end position="124"/>
    </location>
</feature>
<feature type="binding site" evidence="1">
    <location>
        <position position="64"/>
    </location>
    <ligand>
        <name>[4Fe-4S] cluster</name>
        <dbReference type="ChEBI" id="CHEBI:49883"/>
        <label>1</label>
    </ligand>
</feature>
<feature type="binding site" evidence="1">
    <location>
        <position position="67"/>
    </location>
    <ligand>
        <name>[4Fe-4S] cluster</name>
        <dbReference type="ChEBI" id="CHEBI:49883"/>
        <label>1</label>
    </ligand>
</feature>
<feature type="binding site" evidence="1">
    <location>
        <position position="70"/>
    </location>
    <ligand>
        <name>[4Fe-4S] cluster</name>
        <dbReference type="ChEBI" id="CHEBI:49883"/>
        <label>1</label>
    </ligand>
</feature>
<feature type="binding site" evidence="1">
    <location>
        <position position="74"/>
    </location>
    <ligand>
        <name>[4Fe-4S] cluster</name>
        <dbReference type="ChEBI" id="CHEBI:49883"/>
        <label>2</label>
    </ligand>
</feature>
<feature type="binding site" evidence="1">
    <location>
        <position position="104"/>
    </location>
    <ligand>
        <name>[4Fe-4S] cluster</name>
        <dbReference type="ChEBI" id="CHEBI:49883"/>
        <label>2</label>
    </ligand>
</feature>
<feature type="binding site" evidence="1">
    <location>
        <position position="107"/>
    </location>
    <ligand>
        <name>[4Fe-4S] cluster</name>
        <dbReference type="ChEBI" id="CHEBI:49883"/>
        <label>2</label>
    </ligand>
</feature>
<feature type="binding site" evidence="1">
    <location>
        <position position="110"/>
    </location>
    <ligand>
        <name>[4Fe-4S] cluster</name>
        <dbReference type="ChEBI" id="CHEBI:49883"/>
        <label>2</label>
    </ligand>
</feature>
<feature type="binding site" evidence="1">
    <location>
        <position position="114"/>
    </location>
    <ligand>
        <name>[4Fe-4S] cluster</name>
        <dbReference type="ChEBI" id="CHEBI:49883"/>
        <label>1</label>
    </ligand>
</feature>
<proteinExistence type="inferred from homology"/>
<protein>
    <recommendedName>
        <fullName evidence="1">NAD(P)H-quinone oxidoreductase subunit I</fullName>
        <ecNumber evidence="1">7.1.1.-</ecNumber>
    </recommendedName>
    <alternativeName>
        <fullName evidence="1">NAD(P)H dehydrogenase I subunit I</fullName>
    </alternativeName>
    <alternativeName>
        <fullName evidence="1">NDH-1 subunit I</fullName>
        <shortName evidence="1">NDH-I</shortName>
    </alternativeName>
</protein>
<gene>
    <name evidence="1" type="primary">ndhI</name>
    <name type="ordered locus">P9215_01771</name>
</gene>
<sequence>MNNFLQQINSYIKEAFNAGKYLYNGLSVTFDHLRRRPVTVQYPYEKLIPSERYRGRIHYEFDKCIACEVCVRVCPINLPVVDWVMNKETKKKELRNYSIDFGVCIFCGNCVEYCPTNCLSMTEEYELATFDRHNLNFDNVALGRLPTNVTTDPSVKPLRELAYLPKGVMDPHEIPASDTRVGKLPEEVYDWMRPEPNENKDKVSNQIN</sequence>
<organism>
    <name type="scientific">Prochlorococcus marinus (strain MIT 9215)</name>
    <dbReference type="NCBI Taxonomy" id="93060"/>
    <lineage>
        <taxon>Bacteria</taxon>
        <taxon>Bacillati</taxon>
        <taxon>Cyanobacteriota</taxon>
        <taxon>Cyanophyceae</taxon>
        <taxon>Synechococcales</taxon>
        <taxon>Prochlorococcaceae</taxon>
        <taxon>Prochlorococcus</taxon>
    </lineage>
</organism>
<keyword id="KW-0004">4Fe-4S</keyword>
<keyword id="KW-0408">Iron</keyword>
<keyword id="KW-0411">Iron-sulfur</keyword>
<keyword id="KW-0472">Membrane</keyword>
<keyword id="KW-0479">Metal-binding</keyword>
<keyword id="KW-0520">NAD</keyword>
<keyword id="KW-0521">NADP</keyword>
<keyword id="KW-0618">Plastoquinone</keyword>
<keyword id="KW-0874">Quinone</keyword>
<keyword id="KW-0677">Repeat</keyword>
<keyword id="KW-0793">Thylakoid</keyword>
<keyword id="KW-1278">Translocase</keyword>
<name>NDHI_PROM2</name>